<dbReference type="EC" id="6.1.1.5" evidence="1"/>
<dbReference type="EMBL" id="CP000924">
    <property type="protein sequence ID" value="ABY94530.1"/>
    <property type="molecule type" value="Genomic_DNA"/>
</dbReference>
<dbReference type="RefSeq" id="WP_009052491.1">
    <property type="nucleotide sequence ID" value="NC_010321.1"/>
</dbReference>
<dbReference type="SMR" id="B0K8R7"/>
<dbReference type="STRING" id="340099.Teth39_0874"/>
<dbReference type="KEGG" id="tpd:Teth39_0874"/>
<dbReference type="eggNOG" id="COG0060">
    <property type="taxonomic scope" value="Bacteria"/>
</dbReference>
<dbReference type="HOGENOM" id="CLU_001493_7_0_9"/>
<dbReference type="Proteomes" id="UP000002156">
    <property type="component" value="Chromosome"/>
</dbReference>
<dbReference type="GO" id="GO:0005829">
    <property type="term" value="C:cytosol"/>
    <property type="evidence" value="ECO:0007669"/>
    <property type="project" value="TreeGrafter"/>
</dbReference>
<dbReference type="GO" id="GO:0002161">
    <property type="term" value="F:aminoacyl-tRNA deacylase activity"/>
    <property type="evidence" value="ECO:0007669"/>
    <property type="project" value="InterPro"/>
</dbReference>
<dbReference type="GO" id="GO:0005524">
    <property type="term" value="F:ATP binding"/>
    <property type="evidence" value="ECO:0007669"/>
    <property type="project" value="UniProtKB-UniRule"/>
</dbReference>
<dbReference type="GO" id="GO:0004822">
    <property type="term" value="F:isoleucine-tRNA ligase activity"/>
    <property type="evidence" value="ECO:0007669"/>
    <property type="project" value="UniProtKB-UniRule"/>
</dbReference>
<dbReference type="GO" id="GO:0000049">
    <property type="term" value="F:tRNA binding"/>
    <property type="evidence" value="ECO:0007669"/>
    <property type="project" value="InterPro"/>
</dbReference>
<dbReference type="GO" id="GO:0008270">
    <property type="term" value="F:zinc ion binding"/>
    <property type="evidence" value="ECO:0007669"/>
    <property type="project" value="UniProtKB-UniRule"/>
</dbReference>
<dbReference type="GO" id="GO:0006428">
    <property type="term" value="P:isoleucyl-tRNA aminoacylation"/>
    <property type="evidence" value="ECO:0007669"/>
    <property type="project" value="UniProtKB-UniRule"/>
</dbReference>
<dbReference type="CDD" id="cd07960">
    <property type="entry name" value="Anticodon_Ia_Ile_BEm"/>
    <property type="match status" value="1"/>
</dbReference>
<dbReference type="CDD" id="cd00818">
    <property type="entry name" value="IleRS_core"/>
    <property type="match status" value="1"/>
</dbReference>
<dbReference type="FunFam" id="1.10.730.20:FF:000001">
    <property type="entry name" value="Isoleucine--tRNA ligase"/>
    <property type="match status" value="1"/>
</dbReference>
<dbReference type="FunFam" id="3.40.50.620:FF:000152">
    <property type="entry name" value="Isoleucine--tRNA ligase"/>
    <property type="match status" value="1"/>
</dbReference>
<dbReference type="Gene3D" id="1.10.730.20">
    <property type="match status" value="1"/>
</dbReference>
<dbReference type="Gene3D" id="3.40.50.620">
    <property type="entry name" value="HUPs"/>
    <property type="match status" value="2"/>
</dbReference>
<dbReference type="Gene3D" id="1.10.10.830">
    <property type="entry name" value="Ile-tRNA synthetase CP2 domain-like"/>
    <property type="match status" value="1"/>
</dbReference>
<dbReference type="HAMAP" id="MF_02002">
    <property type="entry name" value="Ile_tRNA_synth_type1"/>
    <property type="match status" value="1"/>
</dbReference>
<dbReference type="InterPro" id="IPR001412">
    <property type="entry name" value="aa-tRNA-synth_I_CS"/>
</dbReference>
<dbReference type="InterPro" id="IPR002300">
    <property type="entry name" value="aa-tRNA-synth_Ia"/>
</dbReference>
<dbReference type="InterPro" id="IPR033708">
    <property type="entry name" value="Anticodon_Ile_BEm"/>
</dbReference>
<dbReference type="InterPro" id="IPR002301">
    <property type="entry name" value="Ile-tRNA-ligase"/>
</dbReference>
<dbReference type="InterPro" id="IPR023585">
    <property type="entry name" value="Ile-tRNA-ligase_type1"/>
</dbReference>
<dbReference type="InterPro" id="IPR050081">
    <property type="entry name" value="Ile-tRNA_ligase"/>
</dbReference>
<dbReference type="InterPro" id="IPR013155">
    <property type="entry name" value="M/V/L/I-tRNA-synth_anticd-bd"/>
</dbReference>
<dbReference type="InterPro" id="IPR014729">
    <property type="entry name" value="Rossmann-like_a/b/a_fold"/>
</dbReference>
<dbReference type="InterPro" id="IPR009080">
    <property type="entry name" value="tRNAsynth_Ia_anticodon-bd"/>
</dbReference>
<dbReference type="InterPro" id="IPR009008">
    <property type="entry name" value="Val/Leu/Ile-tRNA-synth_edit"/>
</dbReference>
<dbReference type="InterPro" id="IPR010663">
    <property type="entry name" value="Znf_FPG/IleRS"/>
</dbReference>
<dbReference type="NCBIfam" id="TIGR00392">
    <property type="entry name" value="ileS"/>
    <property type="match status" value="1"/>
</dbReference>
<dbReference type="PANTHER" id="PTHR42765:SF1">
    <property type="entry name" value="ISOLEUCINE--TRNA LIGASE, MITOCHONDRIAL"/>
    <property type="match status" value="1"/>
</dbReference>
<dbReference type="PANTHER" id="PTHR42765">
    <property type="entry name" value="SOLEUCYL-TRNA SYNTHETASE"/>
    <property type="match status" value="1"/>
</dbReference>
<dbReference type="Pfam" id="PF08264">
    <property type="entry name" value="Anticodon_1"/>
    <property type="match status" value="1"/>
</dbReference>
<dbReference type="Pfam" id="PF00133">
    <property type="entry name" value="tRNA-synt_1"/>
    <property type="match status" value="1"/>
</dbReference>
<dbReference type="Pfam" id="PF06827">
    <property type="entry name" value="zf-FPG_IleRS"/>
    <property type="match status" value="1"/>
</dbReference>
<dbReference type="PRINTS" id="PR00984">
    <property type="entry name" value="TRNASYNTHILE"/>
</dbReference>
<dbReference type="SUPFAM" id="SSF47323">
    <property type="entry name" value="Anticodon-binding domain of a subclass of class I aminoacyl-tRNA synthetases"/>
    <property type="match status" value="1"/>
</dbReference>
<dbReference type="SUPFAM" id="SSF52374">
    <property type="entry name" value="Nucleotidylyl transferase"/>
    <property type="match status" value="1"/>
</dbReference>
<dbReference type="SUPFAM" id="SSF50677">
    <property type="entry name" value="ValRS/IleRS/LeuRS editing domain"/>
    <property type="match status" value="1"/>
</dbReference>
<dbReference type="PROSITE" id="PS00178">
    <property type="entry name" value="AA_TRNA_LIGASE_I"/>
    <property type="match status" value="1"/>
</dbReference>
<name>SYI_THEP3</name>
<comment type="function">
    <text evidence="1">Catalyzes the attachment of isoleucine to tRNA(Ile). As IleRS can inadvertently accommodate and process structurally similar amino acids such as valine, to avoid such errors it has two additional distinct tRNA(Ile)-dependent editing activities. One activity is designated as 'pretransfer' editing and involves the hydrolysis of activated Val-AMP. The other activity is designated 'posttransfer' editing and involves deacylation of mischarged Val-tRNA(Ile).</text>
</comment>
<comment type="catalytic activity">
    <reaction evidence="1">
        <text>tRNA(Ile) + L-isoleucine + ATP = L-isoleucyl-tRNA(Ile) + AMP + diphosphate</text>
        <dbReference type="Rhea" id="RHEA:11060"/>
        <dbReference type="Rhea" id="RHEA-COMP:9666"/>
        <dbReference type="Rhea" id="RHEA-COMP:9695"/>
        <dbReference type="ChEBI" id="CHEBI:30616"/>
        <dbReference type="ChEBI" id="CHEBI:33019"/>
        <dbReference type="ChEBI" id="CHEBI:58045"/>
        <dbReference type="ChEBI" id="CHEBI:78442"/>
        <dbReference type="ChEBI" id="CHEBI:78528"/>
        <dbReference type="ChEBI" id="CHEBI:456215"/>
        <dbReference type="EC" id="6.1.1.5"/>
    </reaction>
</comment>
<comment type="cofactor">
    <cofactor evidence="1">
        <name>Zn(2+)</name>
        <dbReference type="ChEBI" id="CHEBI:29105"/>
    </cofactor>
    <text evidence="1">Binds 1 zinc ion per subunit.</text>
</comment>
<comment type="subunit">
    <text evidence="1">Monomer.</text>
</comment>
<comment type="subcellular location">
    <subcellularLocation>
        <location evidence="1">Cytoplasm</location>
    </subcellularLocation>
</comment>
<comment type="domain">
    <text evidence="1">IleRS has two distinct active sites: one for aminoacylation and one for editing. The misactivated valine is translocated from the active site to the editing site, which sterically excludes the correctly activated isoleucine. The single editing site contains two valyl binding pockets, one specific for each substrate (Val-AMP or Val-tRNA(Ile)).</text>
</comment>
<comment type="similarity">
    <text evidence="1">Belongs to the class-I aminoacyl-tRNA synthetase family. IleS type 1 subfamily.</text>
</comment>
<organism>
    <name type="scientific">Thermoanaerobacter pseudethanolicus (strain ATCC 33223 / 39E)</name>
    <name type="common">Clostridium thermohydrosulfuricum</name>
    <dbReference type="NCBI Taxonomy" id="340099"/>
    <lineage>
        <taxon>Bacteria</taxon>
        <taxon>Bacillati</taxon>
        <taxon>Bacillota</taxon>
        <taxon>Clostridia</taxon>
        <taxon>Thermoanaerobacterales</taxon>
        <taxon>Thermoanaerobacteraceae</taxon>
        <taxon>Thermoanaerobacter</taxon>
    </lineage>
</organism>
<gene>
    <name evidence="1" type="primary">ileS</name>
    <name type="ordered locus">Teth39_0874</name>
</gene>
<sequence>MDYNKTLNLPRTDFPMKANLPTREPEILKRWEEMDIYHKTLEKNKGKEKYILHDGPPYANGDIHIGTAMNKVLKDIIVKYKTMRGYDAPYVPGWDTHGLPIEQQAIKTLGIKRHEVSPTEFRKVCRDFAFSQIEKQKAQFKRLGVRGDWDNPYLTLNPEYEAKQIEVFGEMAKKGYIYKGLKPVYWCPSCETALAEAEIEYFDETSDSIYVKFRVKDDLGKFKGIVENLNNVYFVIWTTTTWTIPANLAIALNPEFDYALAKFGDEVYIMAKDMLDTVKKEANLSDYEIVAVFKGKDLEGMKATHPLYDRDSLIILGEHVTLEAGTGCVHTAPGHGEEDFLVGQEYGLEVLNPIDDKGYFTDKAPGYAGLYYEEANKVIKEDLKKANALVAETRITHSYPHCWRCKSPIIFRATEQWFASVEGFREEALKAIKEVNWYPSWGEERITNMVRDRRDWCISRQRVWGVPIPIFYCEKCGKPLINDDTINAVKKIFRQKGSDAWFEMSAEEILPKGITCECGSTKFRKETDIMDVWFDSGSSHAAVLQTHPDLKWPAELYLEGSDQHRGWFQSSLLTSVATRGKAPYRNVLTHGFVVDGEGRKMSKSLGNGIDPADVIKEYGADILRLWTVSADFTSDMRISQEILKQMTEAYRKIRNTSKFLLSNLYDFDPDKDMLPYEELLEIDKWALFRLNRVVEELTEAFDKYEYYDFLHLVHTFCVVDMSSLYLDILKDRLYTYPATSKERRAAQTTLYIILDTLVRLIAPVLTFTSEEIWSYMKHDSQNNFESVQLADWPQVQEKYNNPYIIEKWEKLFDIRKDISKALEIARTDKKIGHSLEAQVDIYPSQELYDFFKGFNDLEYVFIVSKVVLHQPEEPAPQNAYESDDYNLKIVVTHAPGEKCERCWMYSETVGTIKEHPTICARCASHIEQQTQV</sequence>
<feature type="chain" id="PRO_1000189210" description="Isoleucine--tRNA ligase">
    <location>
        <begin position="1"/>
        <end position="932"/>
    </location>
</feature>
<feature type="short sequence motif" description="'HIGH' region">
    <location>
        <begin position="57"/>
        <end position="67"/>
    </location>
</feature>
<feature type="short sequence motif" description="'KMSKS' region">
    <location>
        <begin position="600"/>
        <end position="604"/>
    </location>
</feature>
<feature type="binding site" evidence="1">
    <location>
        <position position="559"/>
    </location>
    <ligand>
        <name>L-isoleucyl-5'-AMP</name>
        <dbReference type="ChEBI" id="CHEBI:178002"/>
    </ligand>
</feature>
<feature type="binding site" evidence="1">
    <location>
        <position position="603"/>
    </location>
    <ligand>
        <name>ATP</name>
        <dbReference type="ChEBI" id="CHEBI:30616"/>
    </ligand>
</feature>
<feature type="binding site" evidence="1">
    <location>
        <position position="899"/>
    </location>
    <ligand>
        <name>Zn(2+)</name>
        <dbReference type="ChEBI" id="CHEBI:29105"/>
    </ligand>
</feature>
<feature type="binding site" evidence="1">
    <location>
        <position position="902"/>
    </location>
    <ligand>
        <name>Zn(2+)</name>
        <dbReference type="ChEBI" id="CHEBI:29105"/>
    </ligand>
</feature>
<feature type="binding site" evidence="1">
    <location>
        <position position="919"/>
    </location>
    <ligand>
        <name>Zn(2+)</name>
        <dbReference type="ChEBI" id="CHEBI:29105"/>
    </ligand>
</feature>
<feature type="binding site" evidence="1">
    <location>
        <position position="922"/>
    </location>
    <ligand>
        <name>Zn(2+)</name>
        <dbReference type="ChEBI" id="CHEBI:29105"/>
    </ligand>
</feature>
<keyword id="KW-0030">Aminoacyl-tRNA synthetase</keyword>
<keyword id="KW-0067">ATP-binding</keyword>
<keyword id="KW-0963">Cytoplasm</keyword>
<keyword id="KW-0436">Ligase</keyword>
<keyword id="KW-0479">Metal-binding</keyword>
<keyword id="KW-0547">Nucleotide-binding</keyword>
<keyword id="KW-0648">Protein biosynthesis</keyword>
<keyword id="KW-1185">Reference proteome</keyword>
<keyword id="KW-0862">Zinc</keyword>
<accession>B0K8R7</accession>
<evidence type="ECO:0000255" key="1">
    <source>
        <dbReference type="HAMAP-Rule" id="MF_02002"/>
    </source>
</evidence>
<reference key="1">
    <citation type="submission" date="2008-01" db="EMBL/GenBank/DDBJ databases">
        <title>Complete sequence of Thermoanaerobacter pseudethanolicus 39E.</title>
        <authorList>
            <person name="Copeland A."/>
            <person name="Lucas S."/>
            <person name="Lapidus A."/>
            <person name="Barry K."/>
            <person name="Glavina del Rio T."/>
            <person name="Dalin E."/>
            <person name="Tice H."/>
            <person name="Pitluck S."/>
            <person name="Bruce D."/>
            <person name="Goodwin L."/>
            <person name="Saunders E."/>
            <person name="Brettin T."/>
            <person name="Detter J.C."/>
            <person name="Han C."/>
            <person name="Schmutz J."/>
            <person name="Larimer F."/>
            <person name="Land M."/>
            <person name="Hauser L."/>
            <person name="Kyrpides N."/>
            <person name="Lykidis A."/>
            <person name="Hemme C."/>
            <person name="Fields M.W."/>
            <person name="He Z."/>
            <person name="Zhou J."/>
            <person name="Richardson P."/>
        </authorList>
    </citation>
    <scope>NUCLEOTIDE SEQUENCE [LARGE SCALE GENOMIC DNA]</scope>
    <source>
        <strain>ATCC 33223 / DSM 2355 / 39E</strain>
    </source>
</reference>
<protein>
    <recommendedName>
        <fullName evidence="1">Isoleucine--tRNA ligase</fullName>
        <ecNumber evidence="1">6.1.1.5</ecNumber>
    </recommendedName>
    <alternativeName>
        <fullName evidence="1">Isoleucyl-tRNA synthetase</fullName>
        <shortName evidence="1">IleRS</shortName>
    </alternativeName>
</protein>
<proteinExistence type="inferred from homology"/>